<dbReference type="EMBL" id="AC084807">
    <property type="protein sequence ID" value="AAK43483.1"/>
    <property type="molecule type" value="Genomic_DNA"/>
</dbReference>
<dbReference type="EMBL" id="CP002684">
    <property type="protein sequence ID" value="AEE32038.1"/>
    <property type="molecule type" value="Genomic_DNA"/>
</dbReference>
<dbReference type="EMBL" id="BT012646">
    <property type="protein sequence ID" value="AAT06465.1"/>
    <property type="molecule type" value="mRNA"/>
</dbReference>
<dbReference type="EMBL" id="AK220578">
    <property type="protein sequence ID" value="BAD94854.1"/>
    <property type="molecule type" value="mRNA"/>
</dbReference>
<dbReference type="RefSeq" id="NP_175091.1">
    <property type="nucleotide sequence ID" value="NM_103551.3"/>
</dbReference>
<dbReference type="SMR" id="Q94LA9"/>
<dbReference type="FunCoup" id="Q94LA9">
    <property type="interactions" value="2"/>
</dbReference>
<dbReference type="STRING" id="3702.Q94LA9"/>
<dbReference type="PaxDb" id="3702-AT1G44542.1"/>
<dbReference type="ProteomicsDB" id="224694"/>
<dbReference type="EnsemblPlants" id="AT1G44542.1">
    <property type="protein sequence ID" value="AT1G44542.1"/>
    <property type="gene ID" value="AT1G44542"/>
</dbReference>
<dbReference type="GeneID" id="841032"/>
<dbReference type="Gramene" id="AT1G44542.1">
    <property type="protein sequence ID" value="AT1G44542.1"/>
    <property type="gene ID" value="AT1G44542"/>
</dbReference>
<dbReference type="KEGG" id="ath:AT1G44542"/>
<dbReference type="Araport" id="AT1G44542"/>
<dbReference type="TAIR" id="AT1G44542">
    <property type="gene designation" value="CYCLASE3"/>
</dbReference>
<dbReference type="eggNOG" id="ENOG502QRBQ">
    <property type="taxonomic scope" value="Eukaryota"/>
</dbReference>
<dbReference type="HOGENOM" id="CLU_030671_4_1_1"/>
<dbReference type="InParanoid" id="Q94LA9"/>
<dbReference type="OMA" id="MMDGAKW"/>
<dbReference type="PhylomeDB" id="Q94LA9"/>
<dbReference type="PRO" id="PR:Q94LA9"/>
<dbReference type="Proteomes" id="UP000006548">
    <property type="component" value="Chromosome 1"/>
</dbReference>
<dbReference type="ExpressionAtlas" id="Q94LA9">
    <property type="expression patterns" value="baseline and differential"/>
</dbReference>
<dbReference type="GO" id="GO:0005576">
    <property type="term" value="C:extracellular region"/>
    <property type="evidence" value="ECO:0007669"/>
    <property type="project" value="UniProtKB-KW"/>
</dbReference>
<dbReference type="GO" id="GO:0005634">
    <property type="term" value="C:nucleus"/>
    <property type="evidence" value="ECO:0007005"/>
    <property type="project" value="TAIR"/>
</dbReference>
<dbReference type="GO" id="GO:0004061">
    <property type="term" value="F:arylformamidase activity"/>
    <property type="evidence" value="ECO:0007669"/>
    <property type="project" value="InterPro"/>
</dbReference>
<dbReference type="GO" id="GO:0019441">
    <property type="term" value="P:L-tryptophan catabolic process to kynurenine"/>
    <property type="evidence" value="ECO:0007669"/>
    <property type="project" value="InterPro"/>
</dbReference>
<dbReference type="FunFam" id="3.50.30.50:FF:000002">
    <property type="entry name" value="Kynurenine formamidase"/>
    <property type="match status" value="1"/>
</dbReference>
<dbReference type="Gene3D" id="3.50.30.50">
    <property type="entry name" value="Putative cyclase"/>
    <property type="match status" value="1"/>
</dbReference>
<dbReference type="InterPro" id="IPR007325">
    <property type="entry name" value="KFase/CYL"/>
</dbReference>
<dbReference type="InterPro" id="IPR037175">
    <property type="entry name" value="KFase_sf"/>
</dbReference>
<dbReference type="PANTHER" id="PTHR31118:SF16">
    <property type="entry name" value="CYCLASE-LIKE PROTEIN 1-RELATED"/>
    <property type="match status" value="1"/>
</dbReference>
<dbReference type="PANTHER" id="PTHR31118">
    <property type="entry name" value="CYCLASE-LIKE PROTEIN 2"/>
    <property type="match status" value="1"/>
</dbReference>
<dbReference type="Pfam" id="PF04199">
    <property type="entry name" value="Cyclase"/>
    <property type="match status" value="1"/>
</dbReference>
<dbReference type="SUPFAM" id="SSF102198">
    <property type="entry name" value="Putative cyclase"/>
    <property type="match status" value="1"/>
</dbReference>
<gene>
    <name evidence="3" type="primary">CYCLASE3</name>
    <name evidence="5" type="ordered locus">At1g44542</name>
    <name evidence="6" type="ORF">T18F15.4</name>
</gene>
<evidence type="ECO:0000250" key="1">
    <source>
        <dbReference type="UniProtKB" id="Q93V74"/>
    </source>
</evidence>
<evidence type="ECO:0000255" key="2"/>
<evidence type="ECO:0000303" key="3">
    <source>
    </source>
</evidence>
<evidence type="ECO:0000305" key="4"/>
<evidence type="ECO:0000312" key="5">
    <source>
        <dbReference type="Araport" id="AT1G44542"/>
    </source>
</evidence>
<evidence type="ECO:0000312" key="6">
    <source>
        <dbReference type="EMBL" id="AAK43483.1"/>
    </source>
</evidence>
<reference key="1">
    <citation type="journal article" date="2000" name="Nature">
        <title>Sequence and analysis of chromosome 1 of the plant Arabidopsis thaliana.</title>
        <authorList>
            <person name="Theologis A."/>
            <person name="Ecker J.R."/>
            <person name="Palm C.J."/>
            <person name="Federspiel N.A."/>
            <person name="Kaul S."/>
            <person name="White O."/>
            <person name="Alonso J."/>
            <person name="Altafi H."/>
            <person name="Araujo R."/>
            <person name="Bowman C.L."/>
            <person name="Brooks S.Y."/>
            <person name="Buehler E."/>
            <person name="Chan A."/>
            <person name="Chao Q."/>
            <person name="Chen H."/>
            <person name="Cheuk R.F."/>
            <person name="Chin C.W."/>
            <person name="Chung M.K."/>
            <person name="Conn L."/>
            <person name="Conway A.B."/>
            <person name="Conway A.R."/>
            <person name="Creasy T.H."/>
            <person name="Dewar K."/>
            <person name="Dunn P."/>
            <person name="Etgu P."/>
            <person name="Feldblyum T.V."/>
            <person name="Feng J.-D."/>
            <person name="Fong B."/>
            <person name="Fujii C.Y."/>
            <person name="Gill J.E."/>
            <person name="Goldsmith A.D."/>
            <person name="Haas B."/>
            <person name="Hansen N.F."/>
            <person name="Hughes B."/>
            <person name="Huizar L."/>
            <person name="Hunter J.L."/>
            <person name="Jenkins J."/>
            <person name="Johnson-Hopson C."/>
            <person name="Khan S."/>
            <person name="Khaykin E."/>
            <person name="Kim C.J."/>
            <person name="Koo H.L."/>
            <person name="Kremenetskaia I."/>
            <person name="Kurtz D.B."/>
            <person name="Kwan A."/>
            <person name="Lam B."/>
            <person name="Langin-Hooper S."/>
            <person name="Lee A."/>
            <person name="Lee J.M."/>
            <person name="Lenz C.A."/>
            <person name="Li J.H."/>
            <person name="Li Y.-P."/>
            <person name="Lin X."/>
            <person name="Liu S.X."/>
            <person name="Liu Z.A."/>
            <person name="Luros J.S."/>
            <person name="Maiti R."/>
            <person name="Marziali A."/>
            <person name="Militscher J."/>
            <person name="Miranda M."/>
            <person name="Nguyen M."/>
            <person name="Nierman W.C."/>
            <person name="Osborne B.I."/>
            <person name="Pai G."/>
            <person name="Peterson J."/>
            <person name="Pham P.K."/>
            <person name="Rizzo M."/>
            <person name="Rooney T."/>
            <person name="Rowley D."/>
            <person name="Sakano H."/>
            <person name="Salzberg S.L."/>
            <person name="Schwartz J.R."/>
            <person name="Shinn P."/>
            <person name="Southwick A.M."/>
            <person name="Sun H."/>
            <person name="Tallon L.J."/>
            <person name="Tambunga G."/>
            <person name="Toriumi M.J."/>
            <person name="Town C.D."/>
            <person name="Utterback T."/>
            <person name="Van Aken S."/>
            <person name="Vaysberg M."/>
            <person name="Vysotskaia V.S."/>
            <person name="Walker M."/>
            <person name="Wu D."/>
            <person name="Yu G."/>
            <person name="Fraser C.M."/>
            <person name="Venter J.C."/>
            <person name="Davis R.W."/>
        </authorList>
    </citation>
    <scope>NUCLEOTIDE SEQUENCE [LARGE SCALE GENOMIC DNA]</scope>
    <source>
        <strain>cv. Columbia</strain>
    </source>
</reference>
<reference key="2">
    <citation type="journal article" date="2017" name="Plant J.">
        <title>Araport11: a complete reannotation of the Arabidopsis thaliana reference genome.</title>
        <authorList>
            <person name="Cheng C.Y."/>
            <person name="Krishnakumar V."/>
            <person name="Chan A.P."/>
            <person name="Thibaud-Nissen F."/>
            <person name="Schobel S."/>
            <person name="Town C.D."/>
        </authorList>
    </citation>
    <scope>GENOME REANNOTATION</scope>
    <source>
        <strain>cv. Columbia</strain>
    </source>
</reference>
<reference key="3">
    <citation type="submission" date="2004-05" db="EMBL/GenBank/DDBJ databases">
        <title>Arabidopsis ORF clones.</title>
        <authorList>
            <person name="Shinn P."/>
            <person name="Chen H."/>
            <person name="Cheuk R."/>
            <person name="Kim C.J."/>
            <person name="Carninci P."/>
            <person name="Hayashizaki Y."/>
            <person name="Ishida J."/>
            <person name="Kamiya A."/>
            <person name="Kawai J."/>
            <person name="Narusaka M."/>
            <person name="Sakurai T."/>
            <person name="Satou M."/>
            <person name="Seki M."/>
            <person name="Shinozaki K."/>
            <person name="Ecker J.R."/>
        </authorList>
    </citation>
    <scope>NUCLEOTIDE SEQUENCE [LARGE SCALE MRNA]</scope>
    <source>
        <strain>cv. Columbia</strain>
    </source>
</reference>
<reference key="4">
    <citation type="submission" date="2005-03" db="EMBL/GenBank/DDBJ databases">
        <title>Large-scale analysis of RIKEN Arabidopsis full-length (RAFL) cDNAs.</title>
        <authorList>
            <person name="Totoki Y."/>
            <person name="Seki M."/>
            <person name="Ishida J."/>
            <person name="Nakajima M."/>
            <person name="Enju A."/>
            <person name="Kamiya A."/>
            <person name="Narusaka M."/>
            <person name="Shin-i T."/>
            <person name="Nakagawa M."/>
            <person name="Sakamoto N."/>
            <person name="Oishi K."/>
            <person name="Kohara Y."/>
            <person name="Kobayashi M."/>
            <person name="Toyoda A."/>
            <person name="Sakaki Y."/>
            <person name="Sakurai T."/>
            <person name="Iida K."/>
            <person name="Akiyama K."/>
            <person name="Satou M."/>
            <person name="Toyoda T."/>
            <person name="Konagaya A."/>
            <person name="Carninci P."/>
            <person name="Kawai J."/>
            <person name="Hayashizaki Y."/>
            <person name="Shinozaki K."/>
        </authorList>
    </citation>
    <scope>NUCLEOTIDE SEQUENCE [LARGE SCALE MRNA]</scope>
    <source>
        <strain>cv. Columbia</strain>
    </source>
</reference>
<reference key="5">
    <citation type="journal article" date="2015" name="Mol. Cell. Proteomics">
        <title>A novel function for Arabidopsis CYCLASE1 in programmed cell death revealed by isobaric tags for relative and absolute quantitation (iTRAQ) analysis of extracellular matrix proteins.</title>
        <authorList>
            <person name="Smith S.J."/>
            <person name="Kroon J.T."/>
            <person name="Simon W.J."/>
            <person name="Slabas A.R."/>
            <person name="Chivasa S."/>
        </authorList>
    </citation>
    <scope>GENE FAMILY</scope>
    <scope>NOMENCLATURE</scope>
</reference>
<organism>
    <name type="scientific">Arabidopsis thaliana</name>
    <name type="common">Mouse-ear cress</name>
    <dbReference type="NCBI Taxonomy" id="3702"/>
    <lineage>
        <taxon>Eukaryota</taxon>
        <taxon>Viridiplantae</taxon>
        <taxon>Streptophyta</taxon>
        <taxon>Embryophyta</taxon>
        <taxon>Tracheophyta</taxon>
        <taxon>Spermatophyta</taxon>
        <taxon>Magnoliopsida</taxon>
        <taxon>eudicotyledons</taxon>
        <taxon>Gunneridae</taxon>
        <taxon>Pentapetalae</taxon>
        <taxon>rosids</taxon>
        <taxon>malvids</taxon>
        <taxon>Brassicales</taxon>
        <taxon>Brassicaceae</taxon>
        <taxon>Camelineae</taxon>
        <taxon>Arabidopsis</taxon>
    </lineage>
</organism>
<sequence length="271" mass="30636">MYHLLIIITTLSFSSINITFAVDEAFPSIPTTFSVATKQHYDVKPIHHEVYDGERKIYDISHQYTPELPVWESSEGLGNFLRLAVSMKNGSDANISKMELSVHSGTHVDAPGHFHDHYYESGFDTDSLDLQILNGPALLVDVPRDKNISAEVMKSLHIPRGIRRVLFKTLNTDRRLMFKKEFDSSFVGFMVDGAKWLVENTDIKLVGLDYLSFAAYDEAPATHRFILERRDIIPVEALKLDDVEVGMYTLHCLPLRLVGAEGAPTRCILIK</sequence>
<comment type="subcellular location">
    <subcellularLocation>
        <location evidence="1">Secreted</location>
        <location evidence="1">Extracellular space</location>
        <location evidence="1">Extracellular matrix</location>
    </subcellularLocation>
</comment>
<comment type="similarity">
    <text evidence="4">Belongs to the Cyclase 1 superfamily.</text>
</comment>
<keyword id="KW-0272">Extracellular matrix</keyword>
<keyword id="KW-1185">Reference proteome</keyword>
<keyword id="KW-0964">Secreted</keyword>
<keyword id="KW-0732">Signal</keyword>
<feature type="signal peptide" evidence="2">
    <location>
        <begin position="1"/>
        <end position="21"/>
    </location>
</feature>
<feature type="chain" id="PRO_5011950592" description="Cyclase-like protein 3">
    <location>
        <begin position="22"/>
        <end position="271"/>
    </location>
</feature>
<accession>Q94LA9</accession>
<name>CYL3_ARATH</name>
<protein>
    <recommendedName>
        <fullName evidence="4">Cyclase-like protein 3</fullName>
    </recommendedName>
</protein>
<proteinExistence type="evidence at transcript level"/>